<feature type="chain" id="PRO_1000022648" description="Trigger factor">
    <location>
        <begin position="1"/>
        <end position="452"/>
    </location>
</feature>
<feature type="domain" description="PPIase FKBP-type" evidence="1">
    <location>
        <begin position="170"/>
        <end position="256"/>
    </location>
</feature>
<gene>
    <name evidence="1" type="primary">tig</name>
    <name type="ordered locus">BAPKO_0646</name>
    <name type="ordered locus">BafPKo_0630</name>
</gene>
<dbReference type="EC" id="5.2.1.8" evidence="1"/>
<dbReference type="EMBL" id="CP000395">
    <property type="protein sequence ID" value="ABH01881.1"/>
    <property type="molecule type" value="Genomic_DNA"/>
</dbReference>
<dbReference type="EMBL" id="CP002933">
    <property type="protein sequence ID" value="AEL69830.1"/>
    <property type="status" value="ALT_INIT"/>
    <property type="molecule type" value="Genomic_DNA"/>
</dbReference>
<dbReference type="RefSeq" id="WP_011601123.1">
    <property type="nucleotide sequence ID" value="NZ_CP160066.1"/>
</dbReference>
<dbReference type="SMR" id="Q0SMP7"/>
<dbReference type="STRING" id="29518.BLA32_01200"/>
<dbReference type="GeneID" id="76832149"/>
<dbReference type="KEGG" id="baf:BAPKO_0646"/>
<dbReference type="KEGG" id="bafz:BafPKo_0630"/>
<dbReference type="PATRIC" id="fig|390236.22.peg.603"/>
<dbReference type="eggNOG" id="COG0544">
    <property type="taxonomic scope" value="Bacteria"/>
</dbReference>
<dbReference type="HOGENOM" id="CLU_033058_3_1_12"/>
<dbReference type="OrthoDB" id="9767721at2"/>
<dbReference type="Proteomes" id="UP000005216">
    <property type="component" value="Chromosome"/>
</dbReference>
<dbReference type="GO" id="GO:0005737">
    <property type="term" value="C:cytoplasm"/>
    <property type="evidence" value="ECO:0007669"/>
    <property type="project" value="UniProtKB-SubCell"/>
</dbReference>
<dbReference type="GO" id="GO:0003755">
    <property type="term" value="F:peptidyl-prolyl cis-trans isomerase activity"/>
    <property type="evidence" value="ECO:0007669"/>
    <property type="project" value="UniProtKB-UniRule"/>
</dbReference>
<dbReference type="GO" id="GO:0044183">
    <property type="term" value="F:protein folding chaperone"/>
    <property type="evidence" value="ECO:0007669"/>
    <property type="project" value="TreeGrafter"/>
</dbReference>
<dbReference type="GO" id="GO:0043022">
    <property type="term" value="F:ribosome binding"/>
    <property type="evidence" value="ECO:0007669"/>
    <property type="project" value="TreeGrafter"/>
</dbReference>
<dbReference type="GO" id="GO:0051083">
    <property type="term" value="P:'de novo' cotranslational protein folding"/>
    <property type="evidence" value="ECO:0007669"/>
    <property type="project" value="TreeGrafter"/>
</dbReference>
<dbReference type="GO" id="GO:0051301">
    <property type="term" value="P:cell division"/>
    <property type="evidence" value="ECO:0007669"/>
    <property type="project" value="UniProtKB-KW"/>
</dbReference>
<dbReference type="GO" id="GO:0061077">
    <property type="term" value="P:chaperone-mediated protein folding"/>
    <property type="evidence" value="ECO:0007669"/>
    <property type="project" value="TreeGrafter"/>
</dbReference>
<dbReference type="GO" id="GO:0015031">
    <property type="term" value="P:protein transport"/>
    <property type="evidence" value="ECO:0007669"/>
    <property type="project" value="UniProtKB-UniRule"/>
</dbReference>
<dbReference type="GO" id="GO:0043335">
    <property type="term" value="P:protein unfolding"/>
    <property type="evidence" value="ECO:0007669"/>
    <property type="project" value="TreeGrafter"/>
</dbReference>
<dbReference type="Gene3D" id="3.10.50.40">
    <property type="match status" value="1"/>
</dbReference>
<dbReference type="Gene3D" id="3.30.70.1050">
    <property type="entry name" value="Trigger factor ribosome-binding domain"/>
    <property type="match status" value="1"/>
</dbReference>
<dbReference type="Gene3D" id="1.10.3120.10">
    <property type="entry name" value="Trigger factor, C-terminal domain"/>
    <property type="match status" value="1"/>
</dbReference>
<dbReference type="HAMAP" id="MF_00303">
    <property type="entry name" value="Trigger_factor_Tig"/>
    <property type="match status" value="1"/>
</dbReference>
<dbReference type="InterPro" id="IPR046357">
    <property type="entry name" value="PPIase_dom_sf"/>
</dbReference>
<dbReference type="InterPro" id="IPR005215">
    <property type="entry name" value="Trig_fac"/>
</dbReference>
<dbReference type="InterPro" id="IPR008880">
    <property type="entry name" value="Trigger_fac_C"/>
</dbReference>
<dbReference type="InterPro" id="IPR037041">
    <property type="entry name" value="Trigger_fac_C_sf"/>
</dbReference>
<dbReference type="InterPro" id="IPR008881">
    <property type="entry name" value="Trigger_fac_ribosome-bd_bac"/>
</dbReference>
<dbReference type="InterPro" id="IPR036611">
    <property type="entry name" value="Trigger_fac_ribosome-bd_sf"/>
</dbReference>
<dbReference type="InterPro" id="IPR027304">
    <property type="entry name" value="Trigger_fact/SurA_dom_sf"/>
</dbReference>
<dbReference type="NCBIfam" id="TIGR00115">
    <property type="entry name" value="tig"/>
    <property type="match status" value="1"/>
</dbReference>
<dbReference type="PANTHER" id="PTHR30560">
    <property type="entry name" value="TRIGGER FACTOR CHAPERONE AND PEPTIDYL-PROLYL CIS/TRANS ISOMERASE"/>
    <property type="match status" value="1"/>
</dbReference>
<dbReference type="PANTHER" id="PTHR30560:SF3">
    <property type="entry name" value="TRIGGER FACTOR-LIKE PROTEIN TIG, CHLOROPLASTIC"/>
    <property type="match status" value="1"/>
</dbReference>
<dbReference type="Pfam" id="PF05698">
    <property type="entry name" value="Trigger_C"/>
    <property type="match status" value="1"/>
</dbReference>
<dbReference type="Pfam" id="PF05697">
    <property type="entry name" value="Trigger_N"/>
    <property type="match status" value="1"/>
</dbReference>
<dbReference type="PIRSF" id="PIRSF003095">
    <property type="entry name" value="Trigger_factor"/>
    <property type="match status" value="1"/>
</dbReference>
<dbReference type="SUPFAM" id="SSF54534">
    <property type="entry name" value="FKBP-like"/>
    <property type="match status" value="1"/>
</dbReference>
<dbReference type="SUPFAM" id="SSF109998">
    <property type="entry name" value="Triger factor/SurA peptide-binding domain-like"/>
    <property type="match status" value="1"/>
</dbReference>
<dbReference type="SUPFAM" id="SSF102735">
    <property type="entry name" value="Trigger factor ribosome-binding domain"/>
    <property type="match status" value="1"/>
</dbReference>
<reference key="1">
    <citation type="journal article" date="2006" name="BMC Genomics">
        <title>Comparative genome analysis: selection pressure on the Borrelia vls cassettes is essential for infectivity.</title>
        <authorList>
            <person name="Gloeckner G."/>
            <person name="Schulte-Spechtel U."/>
            <person name="Schilhabel M."/>
            <person name="Felder M."/>
            <person name="Suehnel J."/>
            <person name="Wilske B."/>
            <person name="Platzer M."/>
        </authorList>
    </citation>
    <scope>NUCLEOTIDE SEQUENCE [LARGE SCALE GENOMIC DNA]</scope>
    <source>
        <strain>PKo</strain>
    </source>
</reference>
<reference key="2">
    <citation type="journal article" date="2011" name="J. Bacteriol.">
        <title>Whole-genome sequences of two Borrelia afzelii and two Borrelia garinii Lyme disease agent isolates.</title>
        <authorList>
            <person name="Casjens S.R."/>
            <person name="Mongodin E.F."/>
            <person name="Qiu W.G."/>
            <person name="Dunn J.J."/>
            <person name="Luft B.J."/>
            <person name="Fraser-Liggett C.M."/>
            <person name="Schutzer S.E."/>
        </authorList>
    </citation>
    <scope>NUCLEOTIDE SEQUENCE [LARGE SCALE GENOMIC DNA]</scope>
    <source>
        <strain>PKo</strain>
    </source>
</reference>
<name>TIG_BORAP</name>
<proteinExistence type="inferred from homology"/>
<organism>
    <name type="scientific">Borreliella afzelii (strain PKo)</name>
    <name type="common">Borrelia afzelii</name>
    <dbReference type="NCBI Taxonomy" id="390236"/>
    <lineage>
        <taxon>Bacteria</taxon>
        <taxon>Pseudomonadati</taxon>
        <taxon>Spirochaetota</taxon>
        <taxon>Spirochaetia</taxon>
        <taxon>Spirochaetales</taxon>
        <taxon>Borreliaceae</taxon>
        <taxon>Borreliella</taxon>
    </lineage>
</organism>
<sequence>MILSKDIRLLPGSKVEAVIRVSKNIIQEKYNSLLQDYSSRLKIQGFRIGKVPISIIEKKYSEGLRATVLEEVINNSLKEFFKEEPKRPLSYASPTIKEENLRLNLDKDFEFTFVYETYPEFKVPNIDDIDIKVEVPEVFIDDSDIDNEIKSLQIENSIIIEDEEGVVKKDSIVKVDFVELDDLLNEIVSTKRQDFVFTVGKSETYYDFDRDVIGMRINEERVIEKSYITDYKFEELAGSLKKLKIKIKSIKKRDLPLIDDEFAKDISERYNTLDDLKNFIRSKILSLVEEKKEALKLNKFFSTISEKLEIDIPRSMIEAEIEIAFKDAKRQNKMSLEEFKSMFYSSGYNGSDSLKDEILSNLKSKLIIQKMVDLDPIKVTENDLKDEMVRQSENSGVSYEEIKKFYEDQNLIFYLKDDIKRKIVEKKILASLKEVKGKQVSFKDFVNYKICE</sequence>
<comment type="function">
    <text evidence="1">Involved in protein export. Acts as a chaperone by maintaining the newly synthesized protein in an open conformation. Functions as a peptidyl-prolyl cis-trans isomerase.</text>
</comment>
<comment type="catalytic activity">
    <reaction evidence="1">
        <text>[protein]-peptidylproline (omega=180) = [protein]-peptidylproline (omega=0)</text>
        <dbReference type="Rhea" id="RHEA:16237"/>
        <dbReference type="Rhea" id="RHEA-COMP:10747"/>
        <dbReference type="Rhea" id="RHEA-COMP:10748"/>
        <dbReference type="ChEBI" id="CHEBI:83833"/>
        <dbReference type="ChEBI" id="CHEBI:83834"/>
        <dbReference type="EC" id="5.2.1.8"/>
    </reaction>
</comment>
<comment type="subcellular location">
    <subcellularLocation>
        <location>Cytoplasm</location>
    </subcellularLocation>
    <text evidence="1">About half TF is bound to the ribosome near the polypeptide exit tunnel while the other half is free in the cytoplasm.</text>
</comment>
<comment type="domain">
    <text evidence="1">Consists of 3 domains; the N-terminus binds the ribosome, the middle domain has PPIase activity, while the C-terminus has intrinsic chaperone activity on its own.</text>
</comment>
<comment type="similarity">
    <text evidence="1">Belongs to the FKBP-type PPIase family. Tig subfamily.</text>
</comment>
<comment type="sequence caution" evidence="2">
    <conflict type="erroneous initiation">
        <sequence resource="EMBL-CDS" id="AEL69830"/>
    </conflict>
    <text>Truncated N-terminus.</text>
</comment>
<protein>
    <recommendedName>
        <fullName evidence="1">Trigger factor</fullName>
        <shortName evidence="1">TF</shortName>
        <ecNumber evidence="1">5.2.1.8</ecNumber>
    </recommendedName>
    <alternativeName>
        <fullName evidence="1">PPIase</fullName>
    </alternativeName>
</protein>
<keyword id="KW-0131">Cell cycle</keyword>
<keyword id="KW-0132">Cell division</keyword>
<keyword id="KW-0143">Chaperone</keyword>
<keyword id="KW-0963">Cytoplasm</keyword>
<keyword id="KW-0413">Isomerase</keyword>
<keyword id="KW-0697">Rotamase</keyword>
<evidence type="ECO:0000255" key="1">
    <source>
        <dbReference type="HAMAP-Rule" id="MF_00303"/>
    </source>
</evidence>
<evidence type="ECO:0000305" key="2"/>
<accession>Q0SMP7</accession>
<accession>G0IQG0</accession>